<gene>
    <name evidence="1" type="primary">rppH</name>
    <name evidence="1" type="synonym">nudH</name>
    <name type="ordered locus">XOO3927</name>
</gene>
<evidence type="ECO:0000255" key="1">
    <source>
        <dbReference type="HAMAP-Rule" id="MF_00298"/>
    </source>
</evidence>
<evidence type="ECO:0000256" key="2">
    <source>
        <dbReference type="SAM" id="MobiDB-lite"/>
    </source>
</evidence>
<protein>
    <recommendedName>
        <fullName evidence="1">RNA pyrophosphohydrolase</fullName>
        <ecNumber evidence="1">3.6.1.-</ecNumber>
    </recommendedName>
    <alternativeName>
        <fullName evidence="1">(Di)nucleoside polyphosphate hydrolase</fullName>
    </alternativeName>
</protein>
<name>RPPH_XANOM</name>
<dbReference type="EC" id="3.6.1.-" evidence="1"/>
<dbReference type="EMBL" id="AP008229">
    <property type="protein sequence ID" value="BAE70682.1"/>
    <property type="molecule type" value="Genomic_DNA"/>
</dbReference>
<dbReference type="RefSeq" id="WP_011260490.1">
    <property type="nucleotide sequence ID" value="NC_007705.1"/>
</dbReference>
<dbReference type="SMR" id="Q2NYE5"/>
<dbReference type="KEGG" id="xom:XOO3927"/>
<dbReference type="HOGENOM" id="CLU_087195_3_1_6"/>
<dbReference type="GO" id="GO:0016462">
    <property type="term" value="F:pyrophosphatase activity"/>
    <property type="evidence" value="ECO:0007669"/>
    <property type="project" value="UniProtKB-ARBA"/>
</dbReference>
<dbReference type="CDD" id="cd03671">
    <property type="entry name" value="NUDIX_Ap4A_hydrolase_plant_like"/>
    <property type="match status" value="1"/>
</dbReference>
<dbReference type="FunFam" id="3.90.79.10:FF:000001">
    <property type="entry name" value="RNA pyrophosphohydrolase"/>
    <property type="match status" value="1"/>
</dbReference>
<dbReference type="Gene3D" id="3.90.79.10">
    <property type="entry name" value="Nucleoside Triphosphate Pyrophosphohydrolase"/>
    <property type="match status" value="1"/>
</dbReference>
<dbReference type="HAMAP" id="MF_00298">
    <property type="entry name" value="Nudix_RppH"/>
    <property type="match status" value="1"/>
</dbReference>
<dbReference type="InterPro" id="IPR015797">
    <property type="entry name" value="NUDIX_hydrolase-like_dom_sf"/>
</dbReference>
<dbReference type="InterPro" id="IPR020084">
    <property type="entry name" value="NUDIX_hydrolase_CS"/>
</dbReference>
<dbReference type="InterPro" id="IPR000086">
    <property type="entry name" value="NUDIX_hydrolase_dom"/>
</dbReference>
<dbReference type="InterPro" id="IPR022927">
    <property type="entry name" value="RppH"/>
</dbReference>
<dbReference type="NCBIfam" id="NF001937">
    <property type="entry name" value="PRK00714.1-4"/>
    <property type="match status" value="1"/>
</dbReference>
<dbReference type="NCBIfam" id="NF001938">
    <property type="entry name" value="PRK00714.1-5"/>
    <property type="match status" value="1"/>
</dbReference>
<dbReference type="PANTHER" id="PTHR43736">
    <property type="entry name" value="ADP-RIBOSE PYROPHOSPHATASE"/>
    <property type="match status" value="1"/>
</dbReference>
<dbReference type="PANTHER" id="PTHR43736:SF1">
    <property type="entry name" value="DIHYDRONEOPTERIN TRIPHOSPHATE DIPHOSPHATASE"/>
    <property type="match status" value="1"/>
</dbReference>
<dbReference type="Pfam" id="PF00293">
    <property type="entry name" value="NUDIX"/>
    <property type="match status" value="1"/>
</dbReference>
<dbReference type="SUPFAM" id="SSF55811">
    <property type="entry name" value="Nudix"/>
    <property type="match status" value="1"/>
</dbReference>
<dbReference type="PROSITE" id="PS51462">
    <property type="entry name" value="NUDIX"/>
    <property type="match status" value="1"/>
</dbReference>
<dbReference type="PROSITE" id="PS00893">
    <property type="entry name" value="NUDIX_BOX"/>
    <property type="match status" value="1"/>
</dbReference>
<feature type="chain" id="PRO_0000231947" description="RNA pyrophosphohydrolase">
    <location>
        <begin position="1"/>
        <end position="205"/>
    </location>
</feature>
<feature type="domain" description="Nudix hydrolase" evidence="1">
    <location>
        <begin position="6"/>
        <end position="149"/>
    </location>
</feature>
<feature type="region of interest" description="Disordered" evidence="2">
    <location>
        <begin position="177"/>
        <end position="205"/>
    </location>
</feature>
<feature type="short sequence motif" description="Nudix box">
    <location>
        <begin position="38"/>
        <end position="59"/>
    </location>
</feature>
<feature type="compositionally biased region" description="Basic residues" evidence="2">
    <location>
        <begin position="187"/>
        <end position="196"/>
    </location>
</feature>
<organism>
    <name type="scientific">Xanthomonas oryzae pv. oryzae (strain MAFF 311018)</name>
    <dbReference type="NCBI Taxonomy" id="342109"/>
    <lineage>
        <taxon>Bacteria</taxon>
        <taxon>Pseudomonadati</taxon>
        <taxon>Pseudomonadota</taxon>
        <taxon>Gammaproteobacteria</taxon>
        <taxon>Lysobacterales</taxon>
        <taxon>Lysobacteraceae</taxon>
        <taxon>Xanthomonas</taxon>
    </lineage>
</organism>
<keyword id="KW-0378">Hydrolase</keyword>
<accession>Q2NYE5</accession>
<comment type="function">
    <text evidence="1">Accelerates the degradation of transcripts by removing pyrophosphate from the 5'-end of triphosphorylated RNA, leading to a more labile monophosphorylated state that can stimulate subsequent ribonuclease cleavage.</text>
</comment>
<comment type="cofactor">
    <cofactor evidence="1">
        <name>a divalent metal cation</name>
        <dbReference type="ChEBI" id="CHEBI:60240"/>
    </cofactor>
</comment>
<comment type="similarity">
    <text evidence="1">Belongs to the Nudix hydrolase family. RppH subfamily.</text>
</comment>
<sequence>MIDPDGFRPNVGIVLMRQDGQVFWARRVRRDGWQFPQGGMNTDETPVEAMYRELREETGLLPEHVELLGATPGWLRYRLPSRAVRRNERQVCIGQKQVWFLLRFTGDESHLKLDHTDTPEFDHWRWVDFWYPVEHVVMFKRGVYARALRHLAPIAQNLAGPAAVGAMPERALEAWLPGSSAAGHDSPRKRPRKRSGARPMRINND</sequence>
<proteinExistence type="inferred from homology"/>
<reference key="1">
    <citation type="journal article" date="2005" name="Jpn. Agric. Res. Q.">
        <title>Genome sequence of Xanthomonas oryzae pv. oryzae suggests contribution of large numbers of effector genes and insertion sequences to its race diversity.</title>
        <authorList>
            <person name="Ochiai H."/>
            <person name="Inoue Y."/>
            <person name="Takeya M."/>
            <person name="Sasaki A."/>
            <person name="Kaku H."/>
        </authorList>
    </citation>
    <scope>NUCLEOTIDE SEQUENCE [LARGE SCALE GENOMIC DNA]</scope>
    <source>
        <strain>MAFF 311018</strain>
    </source>
</reference>